<protein>
    <recommendedName>
        <fullName evidence="1">4-hydroxy-3-methylbut-2-enyl diphosphate reductase</fullName>
        <shortName evidence="1">HMBPP reductase</shortName>
        <ecNumber evidence="1">1.17.7.4</ecNumber>
    </recommendedName>
</protein>
<feature type="chain" id="PRO_1000021144" description="4-hydroxy-3-methylbut-2-enyl diphosphate reductase">
    <location>
        <begin position="1"/>
        <end position="350"/>
    </location>
</feature>
<feature type="active site" description="Proton donor" evidence="1">
    <location>
        <position position="136"/>
    </location>
</feature>
<feature type="binding site" evidence="1">
    <location>
        <position position="19"/>
    </location>
    <ligand>
        <name>[4Fe-4S] cluster</name>
        <dbReference type="ChEBI" id="CHEBI:49883"/>
    </ligand>
</feature>
<feature type="binding site" evidence="1">
    <location>
        <position position="48"/>
    </location>
    <ligand>
        <name>(2E)-4-hydroxy-3-methylbut-2-enyl diphosphate</name>
        <dbReference type="ChEBI" id="CHEBI:128753"/>
    </ligand>
</feature>
<feature type="binding site" evidence="1">
    <location>
        <position position="48"/>
    </location>
    <ligand>
        <name>dimethylallyl diphosphate</name>
        <dbReference type="ChEBI" id="CHEBI:57623"/>
    </ligand>
</feature>
<feature type="binding site" evidence="1">
    <location>
        <position position="48"/>
    </location>
    <ligand>
        <name>isopentenyl diphosphate</name>
        <dbReference type="ChEBI" id="CHEBI:128769"/>
    </ligand>
</feature>
<feature type="binding site" evidence="1">
    <location>
        <position position="84"/>
    </location>
    <ligand>
        <name>(2E)-4-hydroxy-3-methylbut-2-enyl diphosphate</name>
        <dbReference type="ChEBI" id="CHEBI:128753"/>
    </ligand>
</feature>
<feature type="binding site" evidence="1">
    <location>
        <position position="84"/>
    </location>
    <ligand>
        <name>dimethylallyl diphosphate</name>
        <dbReference type="ChEBI" id="CHEBI:57623"/>
    </ligand>
</feature>
<feature type="binding site" evidence="1">
    <location>
        <position position="84"/>
    </location>
    <ligand>
        <name>isopentenyl diphosphate</name>
        <dbReference type="ChEBI" id="CHEBI:128769"/>
    </ligand>
</feature>
<feature type="binding site" evidence="1">
    <location>
        <position position="106"/>
    </location>
    <ligand>
        <name>[4Fe-4S] cluster</name>
        <dbReference type="ChEBI" id="CHEBI:49883"/>
    </ligand>
</feature>
<feature type="binding site" evidence="1">
    <location>
        <position position="134"/>
    </location>
    <ligand>
        <name>(2E)-4-hydroxy-3-methylbut-2-enyl diphosphate</name>
        <dbReference type="ChEBI" id="CHEBI:128753"/>
    </ligand>
</feature>
<feature type="binding site" evidence="1">
    <location>
        <position position="134"/>
    </location>
    <ligand>
        <name>dimethylallyl diphosphate</name>
        <dbReference type="ChEBI" id="CHEBI:57623"/>
    </ligand>
</feature>
<feature type="binding site" evidence="1">
    <location>
        <position position="134"/>
    </location>
    <ligand>
        <name>isopentenyl diphosphate</name>
        <dbReference type="ChEBI" id="CHEBI:128769"/>
    </ligand>
</feature>
<feature type="binding site" evidence="1">
    <location>
        <position position="175"/>
    </location>
    <ligand>
        <name>(2E)-4-hydroxy-3-methylbut-2-enyl diphosphate</name>
        <dbReference type="ChEBI" id="CHEBI:128753"/>
    </ligand>
</feature>
<feature type="binding site" evidence="1">
    <location>
        <position position="205"/>
    </location>
    <ligand>
        <name>[4Fe-4S] cluster</name>
        <dbReference type="ChEBI" id="CHEBI:49883"/>
    </ligand>
</feature>
<feature type="binding site" evidence="1">
    <location>
        <position position="233"/>
    </location>
    <ligand>
        <name>(2E)-4-hydroxy-3-methylbut-2-enyl diphosphate</name>
        <dbReference type="ChEBI" id="CHEBI:128753"/>
    </ligand>
</feature>
<feature type="binding site" evidence="1">
    <location>
        <position position="233"/>
    </location>
    <ligand>
        <name>dimethylallyl diphosphate</name>
        <dbReference type="ChEBI" id="CHEBI:57623"/>
    </ligand>
</feature>
<feature type="binding site" evidence="1">
    <location>
        <position position="233"/>
    </location>
    <ligand>
        <name>isopentenyl diphosphate</name>
        <dbReference type="ChEBI" id="CHEBI:128769"/>
    </ligand>
</feature>
<feature type="binding site" evidence="1">
    <location>
        <position position="234"/>
    </location>
    <ligand>
        <name>(2E)-4-hydroxy-3-methylbut-2-enyl diphosphate</name>
        <dbReference type="ChEBI" id="CHEBI:128753"/>
    </ligand>
</feature>
<feature type="binding site" evidence="1">
    <location>
        <position position="234"/>
    </location>
    <ligand>
        <name>dimethylallyl diphosphate</name>
        <dbReference type="ChEBI" id="CHEBI:57623"/>
    </ligand>
</feature>
<feature type="binding site" evidence="1">
    <location>
        <position position="234"/>
    </location>
    <ligand>
        <name>isopentenyl diphosphate</name>
        <dbReference type="ChEBI" id="CHEBI:128769"/>
    </ligand>
</feature>
<feature type="binding site" evidence="1">
    <location>
        <position position="235"/>
    </location>
    <ligand>
        <name>(2E)-4-hydroxy-3-methylbut-2-enyl diphosphate</name>
        <dbReference type="ChEBI" id="CHEBI:128753"/>
    </ligand>
</feature>
<feature type="binding site" evidence="1">
    <location>
        <position position="235"/>
    </location>
    <ligand>
        <name>dimethylallyl diphosphate</name>
        <dbReference type="ChEBI" id="CHEBI:57623"/>
    </ligand>
</feature>
<feature type="binding site" evidence="1">
    <location>
        <position position="235"/>
    </location>
    <ligand>
        <name>isopentenyl diphosphate</name>
        <dbReference type="ChEBI" id="CHEBI:128769"/>
    </ligand>
</feature>
<feature type="binding site" evidence="1">
    <location>
        <position position="278"/>
    </location>
    <ligand>
        <name>(2E)-4-hydroxy-3-methylbut-2-enyl diphosphate</name>
        <dbReference type="ChEBI" id="CHEBI:128753"/>
    </ligand>
</feature>
<feature type="binding site" evidence="1">
    <location>
        <position position="278"/>
    </location>
    <ligand>
        <name>dimethylallyl diphosphate</name>
        <dbReference type="ChEBI" id="CHEBI:57623"/>
    </ligand>
</feature>
<feature type="binding site" evidence="1">
    <location>
        <position position="278"/>
    </location>
    <ligand>
        <name>isopentenyl diphosphate</name>
        <dbReference type="ChEBI" id="CHEBI:128769"/>
    </ligand>
</feature>
<name>ISPH_BRUA4</name>
<evidence type="ECO:0000255" key="1">
    <source>
        <dbReference type="HAMAP-Rule" id="MF_00191"/>
    </source>
</evidence>
<organism>
    <name type="scientific">Brucella anthropi (strain ATCC 49188 / DSM 6882 / CCUG 24695 / JCM 21032 / LMG 3331 / NBRC 15819 / NCTC 12168 / Alc 37)</name>
    <name type="common">Ochrobactrum anthropi</name>
    <dbReference type="NCBI Taxonomy" id="439375"/>
    <lineage>
        <taxon>Bacteria</taxon>
        <taxon>Pseudomonadati</taxon>
        <taxon>Pseudomonadota</taxon>
        <taxon>Alphaproteobacteria</taxon>
        <taxon>Hyphomicrobiales</taxon>
        <taxon>Brucellaceae</taxon>
        <taxon>Brucella/Ochrobactrum group</taxon>
        <taxon>Brucella</taxon>
    </lineage>
</organism>
<sequence>MTDQRPSLEIRLCGPRGFCAGVDRAIQIVVLALKKYGAPVYVRHEIVHNRYVVEGLQSRGAIFVEELHEIPAEHRDQPVVFSAHGVPKSVPADAEAKNLFYLDATCPLVSKVHKQAMRHQRLGRHVILIGHSGHPEVIGTMGQLPDGAVTLIETVEDARSCHFDDENNLGFVTQTTLSVDDTAGIIEELQARFPNLSAPAAESICYATTNRQDAVRSAAPGCDLFLIVGAPNSSNSKRLVEVAEKAGARMSMLVQRAADIEWDRIGDISVVGLSAGASAPEIIVDEIIDAFKARFNVKIELAETTVETENFLVNREIRDVELTVQDMAFVNGEHRVVGIPKLMPKIIQGK</sequence>
<reference key="1">
    <citation type="journal article" date="2011" name="J. Bacteriol.">
        <title>Genome of Ochrobactrum anthropi ATCC 49188 T, a versatile opportunistic pathogen and symbiont of several eukaryotic hosts.</title>
        <authorList>
            <person name="Chain P.S."/>
            <person name="Lang D.M."/>
            <person name="Comerci D.J."/>
            <person name="Malfatti S.A."/>
            <person name="Vergez L.M."/>
            <person name="Shin M."/>
            <person name="Ugalde R.A."/>
            <person name="Garcia E."/>
            <person name="Tolmasky M.E."/>
        </authorList>
    </citation>
    <scope>NUCLEOTIDE SEQUENCE [LARGE SCALE GENOMIC DNA]</scope>
    <source>
        <strain>ATCC 49188 / DSM 6882 / CCUG 24695 / JCM 21032 / LMG 3331 / NBRC 15819 / NCTC 12168 / Alc 37</strain>
    </source>
</reference>
<comment type="function">
    <text evidence="1">Catalyzes the conversion of 1-hydroxy-2-methyl-2-(E)-butenyl 4-diphosphate (HMBPP) into a mixture of isopentenyl diphosphate (IPP) and dimethylallyl diphosphate (DMAPP). Acts in the terminal step of the DOXP/MEP pathway for isoprenoid precursor biosynthesis.</text>
</comment>
<comment type="catalytic activity">
    <reaction evidence="1">
        <text>isopentenyl diphosphate + 2 oxidized [2Fe-2S]-[ferredoxin] + H2O = (2E)-4-hydroxy-3-methylbut-2-enyl diphosphate + 2 reduced [2Fe-2S]-[ferredoxin] + 2 H(+)</text>
        <dbReference type="Rhea" id="RHEA:24488"/>
        <dbReference type="Rhea" id="RHEA-COMP:10000"/>
        <dbReference type="Rhea" id="RHEA-COMP:10001"/>
        <dbReference type="ChEBI" id="CHEBI:15377"/>
        <dbReference type="ChEBI" id="CHEBI:15378"/>
        <dbReference type="ChEBI" id="CHEBI:33737"/>
        <dbReference type="ChEBI" id="CHEBI:33738"/>
        <dbReference type="ChEBI" id="CHEBI:128753"/>
        <dbReference type="ChEBI" id="CHEBI:128769"/>
        <dbReference type="EC" id="1.17.7.4"/>
    </reaction>
</comment>
<comment type="catalytic activity">
    <reaction evidence="1">
        <text>dimethylallyl diphosphate + 2 oxidized [2Fe-2S]-[ferredoxin] + H2O = (2E)-4-hydroxy-3-methylbut-2-enyl diphosphate + 2 reduced [2Fe-2S]-[ferredoxin] + 2 H(+)</text>
        <dbReference type="Rhea" id="RHEA:24825"/>
        <dbReference type="Rhea" id="RHEA-COMP:10000"/>
        <dbReference type="Rhea" id="RHEA-COMP:10001"/>
        <dbReference type="ChEBI" id="CHEBI:15377"/>
        <dbReference type="ChEBI" id="CHEBI:15378"/>
        <dbReference type="ChEBI" id="CHEBI:33737"/>
        <dbReference type="ChEBI" id="CHEBI:33738"/>
        <dbReference type="ChEBI" id="CHEBI:57623"/>
        <dbReference type="ChEBI" id="CHEBI:128753"/>
        <dbReference type="EC" id="1.17.7.4"/>
    </reaction>
</comment>
<comment type="cofactor">
    <cofactor evidence="1">
        <name>[4Fe-4S] cluster</name>
        <dbReference type="ChEBI" id="CHEBI:49883"/>
    </cofactor>
    <text evidence="1">Binds 1 [4Fe-4S] cluster per subunit.</text>
</comment>
<comment type="pathway">
    <text evidence="1">Isoprenoid biosynthesis; dimethylallyl diphosphate biosynthesis; dimethylallyl diphosphate from (2E)-4-hydroxy-3-methylbutenyl diphosphate: step 1/1.</text>
</comment>
<comment type="pathway">
    <text evidence="1">Isoprenoid biosynthesis; isopentenyl diphosphate biosynthesis via DXP pathway; isopentenyl diphosphate from 1-deoxy-D-xylulose 5-phosphate: step 6/6.</text>
</comment>
<comment type="similarity">
    <text evidence="1">Belongs to the IspH family.</text>
</comment>
<accession>A6WWG6</accession>
<proteinExistence type="inferred from homology"/>
<dbReference type="EC" id="1.17.7.4" evidence="1"/>
<dbReference type="EMBL" id="CP000758">
    <property type="protein sequence ID" value="ABS13320.1"/>
    <property type="molecule type" value="Genomic_DNA"/>
</dbReference>
<dbReference type="RefSeq" id="WP_012090852.1">
    <property type="nucleotide sequence ID" value="NC_009667.1"/>
</dbReference>
<dbReference type="SMR" id="A6WWG6"/>
<dbReference type="STRING" id="439375.Oant_0589"/>
<dbReference type="KEGG" id="oan:Oant_0589"/>
<dbReference type="PATRIC" id="fig|439375.7.peg.629"/>
<dbReference type="eggNOG" id="COG0761">
    <property type="taxonomic scope" value="Bacteria"/>
</dbReference>
<dbReference type="HOGENOM" id="CLU_027486_1_0_5"/>
<dbReference type="PhylomeDB" id="A6WWG6"/>
<dbReference type="UniPathway" id="UPA00056">
    <property type="reaction ID" value="UER00097"/>
</dbReference>
<dbReference type="UniPathway" id="UPA00059">
    <property type="reaction ID" value="UER00105"/>
</dbReference>
<dbReference type="Proteomes" id="UP000002301">
    <property type="component" value="Chromosome 1"/>
</dbReference>
<dbReference type="GO" id="GO:0051539">
    <property type="term" value="F:4 iron, 4 sulfur cluster binding"/>
    <property type="evidence" value="ECO:0007669"/>
    <property type="project" value="UniProtKB-UniRule"/>
</dbReference>
<dbReference type="GO" id="GO:0051745">
    <property type="term" value="F:4-hydroxy-3-methylbut-2-enyl diphosphate reductase activity"/>
    <property type="evidence" value="ECO:0007669"/>
    <property type="project" value="UniProtKB-UniRule"/>
</dbReference>
<dbReference type="GO" id="GO:0046872">
    <property type="term" value="F:metal ion binding"/>
    <property type="evidence" value="ECO:0007669"/>
    <property type="project" value="UniProtKB-KW"/>
</dbReference>
<dbReference type="GO" id="GO:0050992">
    <property type="term" value="P:dimethylallyl diphosphate biosynthetic process"/>
    <property type="evidence" value="ECO:0007669"/>
    <property type="project" value="UniProtKB-UniRule"/>
</dbReference>
<dbReference type="GO" id="GO:0019288">
    <property type="term" value="P:isopentenyl diphosphate biosynthetic process, methylerythritol 4-phosphate pathway"/>
    <property type="evidence" value="ECO:0007669"/>
    <property type="project" value="UniProtKB-UniRule"/>
</dbReference>
<dbReference type="GO" id="GO:0016114">
    <property type="term" value="P:terpenoid biosynthetic process"/>
    <property type="evidence" value="ECO:0007669"/>
    <property type="project" value="UniProtKB-UniRule"/>
</dbReference>
<dbReference type="CDD" id="cd13944">
    <property type="entry name" value="lytB_ispH"/>
    <property type="match status" value="1"/>
</dbReference>
<dbReference type="Gene3D" id="3.40.50.11270">
    <property type="match status" value="1"/>
</dbReference>
<dbReference type="Gene3D" id="3.40.1010.20">
    <property type="entry name" value="4-hydroxy-3-methylbut-2-enyl diphosphate reductase, catalytic domain"/>
    <property type="match status" value="2"/>
</dbReference>
<dbReference type="HAMAP" id="MF_00191">
    <property type="entry name" value="IspH"/>
    <property type="match status" value="1"/>
</dbReference>
<dbReference type="InterPro" id="IPR003451">
    <property type="entry name" value="LytB/IspH"/>
</dbReference>
<dbReference type="NCBIfam" id="TIGR00216">
    <property type="entry name" value="ispH_lytB"/>
    <property type="match status" value="1"/>
</dbReference>
<dbReference type="NCBIfam" id="NF002190">
    <property type="entry name" value="PRK01045.1-4"/>
    <property type="match status" value="1"/>
</dbReference>
<dbReference type="PANTHER" id="PTHR30426">
    <property type="entry name" value="4-HYDROXY-3-METHYLBUT-2-ENYL DIPHOSPHATE REDUCTASE"/>
    <property type="match status" value="1"/>
</dbReference>
<dbReference type="PANTHER" id="PTHR30426:SF0">
    <property type="entry name" value="4-HYDROXY-3-METHYLBUT-2-ENYL DIPHOSPHATE REDUCTASE"/>
    <property type="match status" value="1"/>
</dbReference>
<dbReference type="Pfam" id="PF02401">
    <property type="entry name" value="LYTB"/>
    <property type="match status" value="1"/>
</dbReference>
<keyword id="KW-0004">4Fe-4S</keyword>
<keyword id="KW-0408">Iron</keyword>
<keyword id="KW-0411">Iron-sulfur</keyword>
<keyword id="KW-0414">Isoprene biosynthesis</keyword>
<keyword id="KW-0479">Metal-binding</keyword>
<keyword id="KW-0560">Oxidoreductase</keyword>
<keyword id="KW-1185">Reference proteome</keyword>
<gene>
    <name evidence="1" type="primary">ispH</name>
    <name type="ordered locus">Oant_0589</name>
</gene>